<reference key="1">
    <citation type="journal article" date="2004" name="Nat. Genet.">
        <title>Complete sequencing and characterization of 21,243 full-length human cDNAs.</title>
        <authorList>
            <person name="Ota T."/>
            <person name="Suzuki Y."/>
            <person name="Nishikawa T."/>
            <person name="Otsuki T."/>
            <person name="Sugiyama T."/>
            <person name="Irie R."/>
            <person name="Wakamatsu A."/>
            <person name="Hayashi K."/>
            <person name="Sato H."/>
            <person name="Nagai K."/>
            <person name="Kimura K."/>
            <person name="Makita H."/>
            <person name="Sekine M."/>
            <person name="Obayashi M."/>
            <person name="Nishi T."/>
            <person name="Shibahara T."/>
            <person name="Tanaka T."/>
            <person name="Ishii S."/>
            <person name="Yamamoto J."/>
            <person name="Saito K."/>
            <person name="Kawai Y."/>
            <person name="Isono Y."/>
            <person name="Nakamura Y."/>
            <person name="Nagahari K."/>
            <person name="Murakami K."/>
            <person name="Yasuda T."/>
            <person name="Iwayanagi T."/>
            <person name="Wagatsuma M."/>
            <person name="Shiratori A."/>
            <person name="Sudo H."/>
            <person name="Hosoiri T."/>
            <person name="Kaku Y."/>
            <person name="Kodaira H."/>
            <person name="Kondo H."/>
            <person name="Sugawara M."/>
            <person name="Takahashi M."/>
            <person name="Kanda K."/>
            <person name="Yokoi T."/>
            <person name="Furuya T."/>
            <person name="Kikkawa E."/>
            <person name="Omura Y."/>
            <person name="Abe K."/>
            <person name="Kamihara K."/>
            <person name="Katsuta N."/>
            <person name="Sato K."/>
            <person name="Tanikawa M."/>
            <person name="Yamazaki M."/>
            <person name="Ninomiya K."/>
            <person name="Ishibashi T."/>
            <person name="Yamashita H."/>
            <person name="Murakawa K."/>
            <person name="Fujimori K."/>
            <person name="Tanai H."/>
            <person name="Kimata M."/>
            <person name="Watanabe M."/>
            <person name="Hiraoka S."/>
            <person name="Chiba Y."/>
            <person name="Ishida S."/>
            <person name="Ono Y."/>
            <person name="Takiguchi S."/>
            <person name="Watanabe S."/>
            <person name="Yosida M."/>
            <person name="Hotuta T."/>
            <person name="Kusano J."/>
            <person name="Kanehori K."/>
            <person name="Takahashi-Fujii A."/>
            <person name="Hara H."/>
            <person name="Tanase T.-O."/>
            <person name="Nomura Y."/>
            <person name="Togiya S."/>
            <person name="Komai F."/>
            <person name="Hara R."/>
            <person name="Takeuchi K."/>
            <person name="Arita M."/>
            <person name="Imose N."/>
            <person name="Musashino K."/>
            <person name="Yuuki H."/>
            <person name="Oshima A."/>
            <person name="Sasaki N."/>
            <person name="Aotsuka S."/>
            <person name="Yoshikawa Y."/>
            <person name="Matsunawa H."/>
            <person name="Ichihara T."/>
            <person name="Shiohata N."/>
            <person name="Sano S."/>
            <person name="Moriya S."/>
            <person name="Momiyama H."/>
            <person name="Satoh N."/>
            <person name="Takami S."/>
            <person name="Terashima Y."/>
            <person name="Suzuki O."/>
            <person name="Nakagawa S."/>
            <person name="Senoh A."/>
            <person name="Mizoguchi H."/>
            <person name="Goto Y."/>
            <person name="Shimizu F."/>
            <person name="Wakebe H."/>
            <person name="Hishigaki H."/>
            <person name="Watanabe T."/>
            <person name="Sugiyama A."/>
            <person name="Takemoto M."/>
            <person name="Kawakami B."/>
            <person name="Yamazaki M."/>
            <person name="Watanabe K."/>
            <person name="Kumagai A."/>
            <person name="Itakura S."/>
            <person name="Fukuzumi Y."/>
            <person name="Fujimori Y."/>
            <person name="Komiyama M."/>
            <person name="Tashiro H."/>
            <person name="Tanigami A."/>
            <person name="Fujiwara T."/>
            <person name="Ono T."/>
            <person name="Yamada K."/>
            <person name="Fujii Y."/>
            <person name="Ozaki K."/>
            <person name="Hirao M."/>
            <person name="Ohmori Y."/>
            <person name="Kawabata A."/>
            <person name="Hikiji T."/>
            <person name="Kobatake N."/>
            <person name="Inagaki H."/>
            <person name="Ikema Y."/>
            <person name="Okamoto S."/>
            <person name="Okitani R."/>
            <person name="Kawakami T."/>
            <person name="Noguchi S."/>
            <person name="Itoh T."/>
            <person name="Shigeta K."/>
            <person name="Senba T."/>
            <person name="Matsumura K."/>
            <person name="Nakajima Y."/>
            <person name="Mizuno T."/>
            <person name="Morinaga M."/>
            <person name="Sasaki M."/>
            <person name="Togashi T."/>
            <person name="Oyama M."/>
            <person name="Hata H."/>
            <person name="Watanabe M."/>
            <person name="Komatsu T."/>
            <person name="Mizushima-Sugano J."/>
            <person name="Satoh T."/>
            <person name="Shirai Y."/>
            <person name="Takahashi Y."/>
            <person name="Nakagawa K."/>
            <person name="Okumura K."/>
            <person name="Nagase T."/>
            <person name="Nomura N."/>
            <person name="Kikuchi H."/>
            <person name="Masuho Y."/>
            <person name="Yamashita R."/>
            <person name="Nakai K."/>
            <person name="Yada T."/>
            <person name="Nakamura Y."/>
            <person name="Ohara O."/>
            <person name="Isogai T."/>
            <person name="Sugano S."/>
        </authorList>
    </citation>
    <scope>NUCLEOTIDE SEQUENCE [LARGE SCALE MRNA]</scope>
    <scope>VARIANT SER-96</scope>
    <source>
        <tissue>Cerebellum</tissue>
        <tissue>Kidney</tissue>
    </source>
</reference>
<reference key="2">
    <citation type="journal article" date="2004" name="Nature">
        <title>Defects in RGS9 or its anchor protein R9AP in patients with slow photoreceptor deactivation.</title>
        <authorList>
            <person name="Nishiguchi K.M."/>
            <person name="Sandberg M.A."/>
            <person name="Kooijman A.C."/>
            <person name="Martemyanov K.A."/>
            <person name="Pott J.W.R."/>
            <person name="Hagstrom S.A."/>
            <person name="Arshavsky V.Y."/>
            <person name="Berson E.L."/>
            <person name="Dryja T.P."/>
        </authorList>
    </citation>
    <scope>INVOLVEMENT IN PERRS2</scope>
</reference>
<protein>
    <recommendedName>
        <fullName>Regulator of G-protein signaling 9-binding protein</fullName>
    </recommendedName>
    <alternativeName>
        <fullName>RGS9-anchoring protein</fullName>
    </alternativeName>
</protein>
<name>R9BP_HUMAN</name>
<organism>
    <name type="scientific">Homo sapiens</name>
    <name type="common">Human</name>
    <dbReference type="NCBI Taxonomy" id="9606"/>
    <lineage>
        <taxon>Eukaryota</taxon>
        <taxon>Metazoa</taxon>
        <taxon>Chordata</taxon>
        <taxon>Craniata</taxon>
        <taxon>Vertebrata</taxon>
        <taxon>Euteleostomi</taxon>
        <taxon>Mammalia</taxon>
        <taxon>Eutheria</taxon>
        <taxon>Euarchontoglires</taxon>
        <taxon>Primates</taxon>
        <taxon>Haplorrhini</taxon>
        <taxon>Catarrhini</taxon>
        <taxon>Hominidae</taxon>
        <taxon>Homo</taxon>
    </lineage>
</organism>
<comment type="function">
    <text evidence="1">Regulator of G protein-coupled receptor (GPCR) signaling in phototransduction. Participates in the recovery phase of visual transduction via its interaction with RGS9-1 isoform. Acts as a membrane-anchor that mediates the targeting of RGS9-1 to the photoreceptor outer segment, where phototransduction takes place. Enhances the ability of RGS9-1 to stimulate G protein GTPase activity, allowing the visual signal to be terminated on the physiologically time scale. It also controls the proteolytic stability of RGS9-1, probably by protecting it from degradation (By similarity).</text>
</comment>
<comment type="subunit">
    <text evidence="1">Specifically interacts with isoform RGS9-1 of RGS9. Component of the RGS9-1-Gbeta5 complex composed of RGS9-1, Gbeta5 (GNB5) and RGS9BP (By similarity).</text>
</comment>
<comment type="subcellular location">
    <subcellularLocation>
        <location evidence="1">Membrane</location>
        <topology evidence="1">Single-pass type IV membrane protein</topology>
    </subcellularLocation>
</comment>
<comment type="disease" evidence="4">
    <disease id="DI-06665">
        <name>Prolonged electroretinal response suppression 2</name>
        <acronym>PERRS2</acronym>
        <description>A form of bradyopsia, an ocular disorder characterized by prolonged electroretinal response suppression leading to difficulties adjusting to changes in luminance, normal to subnormal acuity and photophobia. PERRS2 is an autosomal recessive form with onset in childhood.</description>
        <dbReference type="MIM" id="620344"/>
    </disease>
    <text>The disease is caused by variants affecting the gene represented in this entry.</text>
</comment>
<comment type="similarity">
    <text evidence="5">Belongs to the RGS7BP/RGS9BP family.</text>
</comment>
<sequence length="235" mass="25148">MAREECKALLDGLNKTTACYHHLVLTVGGSADSQNLRQELQKTRQKAQELAVSTCARLTAVLRDRGLAADERAEFERLWVAFSGCLDLLEADMRRALELGAAFPLHAPRRPLVRTGVAGASSGVAARALSTRSLRLEAEGDFDVADLRELEREVLQVGEMIDNMEMKVNVPRWTVQARQAAGAELLSTVSAGPSSVVSLQERGGGCDPRKALAAILFGAVLLAAVALAVCVAKLS</sequence>
<gene>
    <name type="primary">RGS9BP</name>
    <name type="synonym">R9AP</name>
</gene>
<keyword id="KW-0175">Coiled coil</keyword>
<keyword id="KW-0472">Membrane</keyword>
<keyword id="KW-1267">Proteomics identification</keyword>
<keyword id="KW-1185">Reference proteome</keyword>
<keyword id="KW-0716">Sensory transduction</keyword>
<keyword id="KW-0734">Signal transduction inhibitor</keyword>
<keyword id="KW-0812">Transmembrane</keyword>
<keyword id="KW-1133">Transmembrane helix</keyword>
<keyword id="KW-0844">Vision</keyword>
<evidence type="ECO:0000250" key="1"/>
<evidence type="ECO:0000255" key="2"/>
<evidence type="ECO:0000269" key="3">
    <source>
    </source>
</evidence>
<evidence type="ECO:0000269" key="4">
    <source>
    </source>
</evidence>
<evidence type="ECO:0000305" key="5"/>
<proteinExistence type="evidence at protein level"/>
<feature type="chain" id="PRO_0000287586" description="Regulator of G-protein signaling 9-binding protein">
    <location>
        <begin position="1"/>
        <end position="235"/>
    </location>
</feature>
<feature type="topological domain" description="Cytoplasmic" evidence="2">
    <location>
        <begin position="1"/>
        <end position="210"/>
    </location>
</feature>
<feature type="transmembrane region" description="Helical; Anchor for type IV membrane protein" evidence="2">
    <location>
        <begin position="211"/>
        <end position="231"/>
    </location>
</feature>
<feature type="topological domain" description="Extracellular" evidence="2">
    <location>
        <begin position="232"/>
        <end position="235"/>
    </location>
</feature>
<feature type="region of interest" description="SNARE-like" evidence="1">
    <location>
        <begin position="153"/>
        <end position="200"/>
    </location>
</feature>
<feature type="coiled-coil region" evidence="2">
    <location>
        <begin position="29"/>
        <end position="54"/>
    </location>
</feature>
<feature type="coiled-coil region" evidence="2">
    <location>
        <begin position="144"/>
        <end position="169"/>
    </location>
</feature>
<feature type="sequence variant" id="VAR_032333" description="In dbSNP:rs259290." evidence="3">
    <original>A</original>
    <variation>S</variation>
    <location>
        <position position="96"/>
    </location>
</feature>
<accession>Q6ZS82</accession>
<accession>Q6ZVJ6</accession>
<dbReference type="EMBL" id="AK124499">
    <property type="protein sequence ID" value="BAC85865.1"/>
    <property type="molecule type" value="mRNA"/>
</dbReference>
<dbReference type="EMBL" id="AK127646">
    <property type="protein sequence ID" value="BAC87072.1"/>
    <property type="molecule type" value="mRNA"/>
</dbReference>
<dbReference type="CCDS" id="CCDS12424.1"/>
<dbReference type="RefSeq" id="NP_997274.2">
    <property type="nucleotide sequence ID" value="NM_207391.3"/>
</dbReference>
<dbReference type="SMR" id="Q6ZS82"/>
<dbReference type="BioGRID" id="132727">
    <property type="interactions" value="48"/>
</dbReference>
<dbReference type="FunCoup" id="Q6ZS82">
    <property type="interactions" value="60"/>
</dbReference>
<dbReference type="IntAct" id="Q6ZS82">
    <property type="interactions" value="15"/>
</dbReference>
<dbReference type="STRING" id="9606.ENSP00000334134"/>
<dbReference type="iPTMnet" id="Q6ZS82"/>
<dbReference type="PhosphoSitePlus" id="Q6ZS82"/>
<dbReference type="BioMuta" id="RGS9BP"/>
<dbReference type="DMDM" id="74711357"/>
<dbReference type="MassIVE" id="Q6ZS82"/>
<dbReference type="PaxDb" id="9606-ENSP00000334134"/>
<dbReference type="PeptideAtlas" id="Q6ZS82"/>
<dbReference type="ProteomicsDB" id="68201"/>
<dbReference type="Antibodypedia" id="55122">
    <property type="antibodies" value="25 antibodies from 9 providers"/>
</dbReference>
<dbReference type="DNASU" id="388531"/>
<dbReference type="Ensembl" id="ENST00000334176.4">
    <property type="protein sequence ID" value="ENSP00000334134.3"/>
    <property type="gene ID" value="ENSG00000186326.4"/>
</dbReference>
<dbReference type="GeneID" id="388531"/>
<dbReference type="KEGG" id="hsa:388531"/>
<dbReference type="MANE-Select" id="ENST00000334176.4">
    <property type="protein sequence ID" value="ENSP00000334134.3"/>
    <property type="RefSeq nucleotide sequence ID" value="NM_207391.3"/>
    <property type="RefSeq protein sequence ID" value="NP_997274.2"/>
</dbReference>
<dbReference type="UCSC" id="uc002ntp.1">
    <property type="organism name" value="human"/>
</dbReference>
<dbReference type="AGR" id="HGNC:30304"/>
<dbReference type="CTD" id="388531"/>
<dbReference type="DisGeNET" id="388531"/>
<dbReference type="GeneCards" id="RGS9BP"/>
<dbReference type="HGNC" id="HGNC:30304">
    <property type="gene designation" value="RGS9BP"/>
</dbReference>
<dbReference type="HPA" id="ENSG00000186326">
    <property type="expression patterns" value="Group enriched (choroid plexus, retina, skeletal muscle)"/>
</dbReference>
<dbReference type="MalaCards" id="RGS9BP"/>
<dbReference type="MIM" id="607814">
    <property type="type" value="gene"/>
</dbReference>
<dbReference type="MIM" id="620344">
    <property type="type" value="phenotype"/>
</dbReference>
<dbReference type="neXtProt" id="NX_Q6ZS82"/>
<dbReference type="OpenTargets" id="ENSG00000186326"/>
<dbReference type="Orphanet" id="75374">
    <property type="disease" value="Bradyopsia"/>
</dbReference>
<dbReference type="PharmGKB" id="PA162401280"/>
<dbReference type="VEuPathDB" id="HostDB:ENSG00000186326"/>
<dbReference type="eggNOG" id="ENOG502QT8D">
    <property type="taxonomic scope" value="Eukaryota"/>
</dbReference>
<dbReference type="GeneTree" id="ENSGT00940000153725"/>
<dbReference type="HOGENOM" id="CLU_093021_0_0_1"/>
<dbReference type="InParanoid" id="Q6ZS82"/>
<dbReference type="OMA" id="MVNDMEM"/>
<dbReference type="OrthoDB" id="6358515at2759"/>
<dbReference type="PAN-GO" id="Q6ZS82">
    <property type="GO annotations" value="4 GO annotations based on evolutionary models"/>
</dbReference>
<dbReference type="PhylomeDB" id="Q6ZS82"/>
<dbReference type="TreeFam" id="TF331562"/>
<dbReference type="PathwayCommons" id="Q6ZS82"/>
<dbReference type="Reactome" id="R-HSA-2514859">
    <property type="pathway name" value="Inactivation, recovery and regulation of the phototransduction cascade"/>
</dbReference>
<dbReference type="SignaLink" id="Q6ZS82"/>
<dbReference type="BioGRID-ORCS" id="388531">
    <property type="hits" value="9 hits in 1149 CRISPR screens"/>
</dbReference>
<dbReference type="GenomeRNAi" id="388531"/>
<dbReference type="Pharos" id="Q6ZS82">
    <property type="development level" value="Tbio"/>
</dbReference>
<dbReference type="PRO" id="PR:Q6ZS82"/>
<dbReference type="Proteomes" id="UP000005640">
    <property type="component" value="Chromosome 19"/>
</dbReference>
<dbReference type="RNAct" id="Q6ZS82">
    <property type="molecule type" value="protein"/>
</dbReference>
<dbReference type="Bgee" id="ENSG00000186326">
    <property type="expression patterns" value="Expressed in male germ line stem cell (sensu Vertebrata) in testis and 60 other cell types or tissues"/>
</dbReference>
<dbReference type="GO" id="GO:0016020">
    <property type="term" value="C:membrane"/>
    <property type="evidence" value="ECO:0007669"/>
    <property type="project" value="UniProtKB-SubCell"/>
</dbReference>
<dbReference type="GO" id="GO:0043005">
    <property type="term" value="C:neuron projection"/>
    <property type="evidence" value="ECO:0000318"/>
    <property type="project" value="GO_Central"/>
</dbReference>
<dbReference type="GO" id="GO:0120200">
    <property type="term" value="C:rod photoreceptor outer segment"/>
    <property type="evidence" value="ECO:0007669"/>
    <property type="project" value="Ensembl"/>
</dbReference>
<dbReference type="GO" id="GO:0050908">
    <property type="term" value="P:detection of light stimulus involved in visual perception"/>
    <property type="evidence" value="ECO:0000318"/>
    <property type="project" value="GO_Central"/>
</dbReference>
<dbReference type="GO" id="GO:0007186">
    <property type="term" value="P:G protein-coupled receptor signaling pathway"/>
    <property type="evidence" value="ECO:0000318"/>
    <property type="project" value="GO_Central"/>
</dbReference>
<dbReference type="GO" id="GO:0009968">
    <property type="term" value="P:negative regulation of signal transduction"/>
    <property type="evidence" value="ECO:0007669"/>
    <property type="project" value="UniProtKB-KW"/>
</dbReference>
<dbReference type="InterPro" id="IPR026512">
    <property type="entry name" value="RGS7BP/RGS9BP"/>
</dbReference>
<dbReference type="PANTHER" id="PTHR21029">
    <property type="entry name" value="R-SEVEN BINDING PROTEIN (R7BP) HOMOLOG"/>
    <property type="match status" value="1"/>
</dbReference>